<keyword id="KW-0687">Ribonucleoprotein</keyword>
<keyword id="KW-0689">Ribosomal protein</keyword>
<organism>
    <name type="scientific">Moorella thermoacetica (strain ATCC 39073 / JCM 9320)</name>
    <dbReference type="NCBI Taxonomy" id="264732"/>
    <lineage>
        <taxon>Bacteria</taxon>
        <taxon>Bacillati</taxon>
        <taxon>Bacillota</taxon>
        <taxon>Clostridia</taxon>
        <taxon>Moorellales</taxon>
        <taxon>Moorellaceae</taxon>
        <taxon>Moorella</taxon>
    </lineage>
</organism>
<proteinExistence type="inferred from homology"/>
<feature type="chain" id="PRO_0000243446" description="Large ribosomal subunit protein bL12">
    <location>
        <begin position="1"/>
        <end position="126"/>
    </location>
</feature>
<dbReference type="EMBL" id="CP000232">
    <property type="protein sequence ID" value="ABC20751.1"/>
    <property type="molecule type" value="Genomic_DNA"/>
</dbReference>
<dbReference type="RefSeq" id="YP_431294.1">
    <property type="nucleotide sequence ID" value="NC_007644.1"/>
</dbReference>
<dbReference type="SMR" id="Q2RFN8"/>
<dbReference type="STRING" id="264732.Moth_2469"/>
<dbReference type="EnsemblBacteria" id="ABC20751">
    <property type="protein sequence ID" value="ABC20751"/>
    <property type="gene ID" value="Moth_2469"/>
</dbReference>
<dbReference type="KEGG" id="mta:Moth_2469"/>
<dbReference type="PATRIC" id="fig|264732.11.peg.2687"/>
<dbReference type="eggNOG" id="COG0222">
    <property type="taxonomic scope" value="Bacteria"/>
</dbReference>
<dbReference type="HOGENOM" id="CLU_086499_3_2_9"/>
<dbReference type="OrthoDB" id="9811748at2"/>
<dbReference type="GO" id="GO:0022625">
    <property type="term" value="C:cytosolic large ribosomal subunit"/>
    <property type="evidence" value="ECO:0007669"/>
    <property type="project" value="TreeGrafter"/>
</dbReference>
<dbReference type="GO" id="GO:0003729">
    <property type="term" value="F:mRNA binding"/>
    <property type="evidence" value="ECO:0007669"/>
    <property type="project" value="TreeGrafter"/>
</dbReference>
<dbReference type="GO" id="GO:0003735">
    <property type="term" value="F:structural constituent of ribosome"/>
    <property type="evidence" value="ECO:0007669"/>
    <property type="project" value="InterPro"/>
</dbReference>
<dbReference type="GO" id="GO:0006412">
    <property type="term" value="P:translation"/>
    <property type="evidence" value="ECO:0007669"/>
    <property type="project" value="UniProtKB-UniRule"/>
</dbReference>
<dbReference type="CDD" id="cd00387">
    <property type="entry name" value="Ribosomal_L7_L12"/>
    <property type="match status" value="1"/>
</dbReference>
<dbReference type="FunFam" id="3.30.1390.10:FF:000001">
    <property type="entry name" value="50S ribosomal protein L7/L12"/>
    <property type="match status" value="1"/>
</dbReference>
<dbReference type="Gene3D" id="3.30.1390.10">
    <property type="match status" value="1"/>
</dbReference>
<dbReference type="Gene3D" id="1.20.5.710">
    <property type="entry name" value="Single helix bin"/>
    <property type="match status" value="1"/>
</dbReference>
<dbReference type="HAMAP" id="MF_00368">
    <property type="entry name" value="Ribosomal_bL12"/>
    <property type="match status" value="1"/>
</dbReference>
<dbReference type="InterPro" id="IPR000206">
    <property type="entry name" value="Ribosomal_bL12"/>
</dbReference>
<dbReference type="InterPro" id="IPR013823">
    <property type="entry name" value="Ribosomal_bL12_C"/>
</dbReference>
<dbReference type="InterPro" id="IPR014719">
    <property type="entry name" value="Ribosomal_bL12_C/ClpS-like"/>
</dbReference>
<dbReference type="InterPro" id="IPR008932">
    <property type="entry name" value="Ribosomal_bL12_oligo"/>
</dbReference>
<dbReference type="InterPro" id="IPR036235">
    <property type="entry name" value="Ribosomal_bL12_oligo_N_sf"/>
</dbReference>
<dbReference type="NCBIfam" id="TIGR00855">
    <property type="entry name" value="L12"/>
    <property type="match status" value="1"/>
</dbReference>
<dbReference type="PANTHER" id="PTHR45987">
    <property type="entry name" value="39S RIBOSOMAL PROTEIN L12"/>
    <property type="match status" value="1"/>
</dbReference>
<dbReference type="PANTHER" id="PTHR45987:SF4">
    <property type="entry name" value="LARGE RIBOSOMAL SUBUNIT PROTEIN BL12M"/>
    <property type="match status" value="1"/>
</dbReference>
<dbReference type="Pfam" id="PF00542">
    <property type="entry name" value="Ribosomal_L12"/>
    <property type="match status" value="1"/>
</dbReference>
<dbReference type="Pfam" id="PF16320">
    <property type="entry name" value="Ribosomal_L12_N"/>
    <property type="match status" value="1"/>
</dbReference>
<dbReference type="SUPFAM" id="SSF54736">
    <property type="entry name" value="ClpS-like"/>
    <property type="match status" value="1"/>
</dbReference>
<dbReference type="SUPFAM" id="SSF48300">
    <property type="entry name" value="Ribosomal protein L7/12, oligomerisation (N-terminal) domain"/>
    <property type="match status" value="1"/>
</dbReference>
<sequence>MSKVQEIIEAVKGLTVLELSELVKALEDEFGVSAAAPVAMAVAPGAAAPAEAPAEEQTEFDVILKEAGDKKINVIKVVREITALGLKEAKALVDEAPKPVKEKVSKEEAESIKAKLEEAGATVEIK</sequence>
<reference key="1">
    <citation type="journal article" date="2008" name="Environ. Microbiol.">
        <title>The complete genome sequence of Moorella thermoacetica (f. Clostridium thermoaceticum).</title>
        <authorList>
            <person name="Pierce E."/>
            <person name="Xie G."/>
            <person name="Barabote R.D."/>
            <person name="Saunders E."/>
            <person name="Han C.S."/>
            <person name="Detter J.C."/>
            <person name="Richardson P."/>
            <person name="Brettin T.S."/>
            <person name="Das A."/>
            <person name="Ljungdahl L.G."/>
            <person name="Ragsdale S.W."/>
        </authorList>
    </citation>
    <scope>NUCLEOTIDE SEQUENCE [LARGE SCALE GENOMIC DNA]</scope>
    <source>
        <strain>ATCC 39073 / JCM 9320</strain>
    </source>
</reference>
<accession>Q2RFN8</accession>
<evidence type="ECO:0000255" key="1">
    <source>
        <dbReference type="HAMAP-Rule" id="MF_00368"/>
    </source>
</evidence>
<evidence type="ECO:0000305" key="2"/>
<gene>
    <name evidence="1" type="primary">rplL</name>
    <name type="ordered locus">Moth_2469</name>
</gene>
<comment type="function">
    <text evidence="1">Forms part of the ribosomal stalk which helps the ribosome interact with GTP-bound translation factors. Is thus essential for accurate translation.</text>
</comment>
<comment type="subunit">
    <text evidence="1">Homodimer. Part of the ribosomal stalk of the 50S ribosomal subunit. Forms a multimeric L10(L12)X complex, where L10 forms an elongated spine to which 2 to 4 L12 dimers bind in a sequential fashion. Binds GTP-bound translation factors.</text>
</comment>
<comment type="similarity">
    <text evidence="1">Belongs to the bacterial ribosomal protein bL12 family.</text>
</comment>
<protein>
    <recommendedName>
        <fullName evidence="1">Large ribosomal subunit protein bL12</fullName>
    </recommendedName>
    <alternativeName>
        <fullName evidence="2">50S ribosomal protein L7/L12</fullName>
    </alternativeName>
</protein>
<name>RL7_MOOTA</name>